<name>RL29_DEIRA</name>
<reference key="1">
    <citation type="journal article" date="1999" name="Science">
        <title>Genome sequence of the radioresistant bacterium Deinococcus radiodurans R1.</title>
        <authorList>
            <person name="White O."/>
            <person name="Eisen J.A."/>
            <person name="Heidelberg J.F."/>
            <person name="Hickey E.K."/>
            <person name="Peterson J.D."/>
            <person name="Dodson R.J."/>
            <person name="Haft D.H."/>
            <person name="Gwinn M.L."/>
            <person name="Nelson W.C."/>
            <person name="Richardson D.L."/>
            <person name="Moffat K.S."/>
            <person name="Qin H."/>
            <person name="Jiang L."/>
            <person name="Pamphile W."/>
            <person name="Crosby M."/>
            <person name="Shen M."/>
            <person name="Vamathevan J.J."/>
            <person name="Lam P."/>
            <person name="McDonald L.A."/>
            <person name="Utterback T.R."/>
            <person name="Zalewski C."/>
            <person name="Makarova K.S."/>
            <person name="Aravind L."/>
            <person name="Daly M.J."/>
            <person name="Minton K.W."/>
            <person name="Fleischmann R.D."/>
            <person name="Ketchum K.A."/>
            <person name="Nelson K.E."/>
            <person name="Salzberg S.L."/>
            <person name="Smith H.O."/>
            <person name="Venter J.C."/>
            <person name="Fraser C.M."/>
        </authorList>
    </citation>
    <scope>NUCLEOTIDE SEQUENCE [LARGE SCALE GENOMIC DNA]</scope>
    <source>
        <strain>ATCC 13939 / DSM 20539 / JCM 16871 / CCUG 27074 / LMG 4051 / NBRC 15346 / NCIMB 9279 / VKM B-1422 / R1</strain>
    </source>
</reference>
<reference key="2">
    <citation type="journal article" date="2001" name="Cell">
        <title>High resolution structure of the large ribosomal subunit from a mesophilic eubacterium.</title>
        <authorList>
            <person name="Harms J."/>
            <person name="Schluenzen F."/>
            <person name="Zarivach R."/>
            <person name="Bashan A."/>
            <person name="Gat S."/>
            <person name="Agmon I."/>
            <person name="Bartels H."/>
            <person name="Franceschi F."/>
            <person name="Yonath A."/>
        </authorList>
    </citation>
    <scope>PROTEIN SEQUENCE OF 1-5</scope>
    <scope>X-RAY CRYSTALLOGRAPHY (3.1 ANGSTROMS) OF THE 50S SUBUNIT</scope>
    <source>
        <strain>ATCC 13939 / DSM 20539 / JCM 16871 / CCUG 27074 / LMG 4051 / NBRC 15346 / NCIMB 9279 / VKM B-1422 / R1</strain>
    </source>
</reference>
<reference key="3">
    <citation type="journal article" date="2001" name="Nature">
        <title>Structural basis for the interaction of antibiotics with the peptidyl transferase centre in eubacteria.</title>
        <authorList>
            <person name="Schluenzen F."/>
            <person name="Zarivach R."/>
            <person name="Harms J."/>
            <person name="Bashan A."/>
            <person name="Tocilj A."/>
            <person name="Albrecht R."/>
            <person name="Yonath A."/>
            <person name="Franceschi F."/>
        </authorList>
    </citation>
    <scope>X-RAY CRYSTALLOGRAPHY (3.1 ANGSTROMS) OF THE 50S SUBUNIT IN COMPLEX WITH FIVE ANTIBIOTICS</scope>
    <source>
        <strain>ATCC 13939 / DSM 20539 / JCM 16871 / CCUG 27074 / LMG 4051 / NBRC 15346 / NCIMB 9279 / VKM B-1422 / R1</strain>
    </source>
</reference>
<reference key="4">
    <citation type="journal article" date="2003" name="Mol. Cell">
        <title>Structural basis of the ribosomal machinery for peptide bond formation, translocation, and nascent chain progression.</title>
        <authorList>
            <person name="Bashan A."/>
            <person name="Agmon I."/>
            <person name="Zarivach R."/>
            <person name="Schluenzen F."/>
            <person name="Harms J."/>
            <person name="Berisio R."/>
            <person name="Bartels H."/>
            <person name="Franceschi F."/>
            <person name="Auerbach T."/>
            <person name="Hansen H.A."/>
            <person name="Kossoy E."/>
            <person name="Kessler M."/>
            <person name="Yonath A."/>
        </authorList>
    </citation>
    <scope>X-RAY CRYSTALLOGRAPHY (3.5 ANGSTROMS) OF THE 50S SUBUNIT IN COMPLEX WITH TRNA MIMICS</scope>
    <source>
        <strain>ATCC 13939 / DSM 20539 / JCM 16871 / CCUG 27074 / LMG 4051 / NBRC 15346 / NCIMB 9279 / VKM B-1422 / R1</strain>
    </source>
</reference>
<reference key="5">
    <citation type="journal article" date="2003" name="Structure">
        <title>Structural basis for the antibiotic activity of ketolides and azalides.</title>
        <authorList>
            <person name="Schluenzen F."/>
            <person name="Harms J.M."/>
            <person name="Franceschi F."/>
            <person name="Hansen H.A."/>
            <person name="Bartels H."/>
            <person name="Zarivach R."/>
            <person name="Yonath A."/>
        </authorList>
    </citation>
    <scope>X-RAY CRYSTALLOGRAPHY (3.3 ANGSTROMS) OF THE 50S SUBUNIT IN COMPLEX WITH MODIFIED MACROLIDE ANTIBIOTICS</scope>
    <source>
        <strain>ATCC 13939 / DSM 20539 / JCM 16871 / CCUG 27074 / LMG 4051 / NBRC 15346 / NCIMB 9279 / VKM B-1422 / R1</strain>
    </source>
</reference>
<reference key="6">
    <citation type="journal article" date="2003" name="Nat. Struct. Biol.">
        <title>Structural insight into the role of the ribosomal tunnel in cellular regulation.</title>
        <authorList>
            <person name="Berisio R."/>
            <person name="Schluenzen F."/>
            <person name="Harms J."/>
            <person name="Bashan A."/>
            <person name="Auerbach T."/>
            <person name="Baram D."/>
            <person name="Yonath A."/>
        </authorList>
    </citation>
    <scope>X-RAY CRYSTALLOGRAPHY (3.4 ANGSTROMS) OF THE 50S SUBUNIT IN COMPLEX WITH TROLEANDOMYCIN</scope>
    <source>
        <strain>ATCC 13939 / DSM 20539 / JCM 16871 / CCUG 27074 / LMG 4051 / NBRC 15346 / NCIMB 9279 / VKM B-1422 / R1</strain>
    </source>
</reference>
<reference key="7">
    <citation type="journal article" date="2004" name="BMC Biol.">
        <title>Alterations at the peptidyl transferase centre of the ribosome induced by the synergistic action of the streptogramins dalfopristin and quinupristin.</title>
        <authorList>
            <person name="Harms J.M."/>
            <person name="Schluenzen F."/>
            <person name="Fucini P."/>
            <person name="Bartels H."/>
            <person name="Yonath A."/>
        </authorList>
    </citation>
    <scope>X-RAY CRYSTALLOGRAPHY (3.4 ANGSTROMS) OF THE 50S SUBUNIT IN COMPLEX WITH THE STREPTOGRAMINS QUINUPRISTIN AND DALFOPRISTIN</scope>
    <source>
        <strain>ATCC 13939 / DSM 20539 / JCM 16871 / CCUG 27074 / LMG 4051 / NBRC 15346 / NCIMB 9279 / VKM B-1422 / R1</strain>
    </source>
</reference>
<reference key="8">
    <citation type="journal article" date="2004" name="Mol. Microbiol.">
        <title>Inhibition of peptide bond formation by pleuromutilins: the structure of the 50S ribosomal subunit from Deinococcus radiodurans in complex with tiamulin.</title>
        <authorList>
            <person name="Schluenzen F."/>
            <person name="Pyetan E."/>
            <person name="Fucini P."/>
            <person name="Yonath A."/>
            <person name="Harms J.M."/>
        </authorList>
    </citation>
    <scope>X-RAY CRYSTALLOGRAPHY (3.5 ANGSTROMS) OF THE 50S SUBUNIT IN COMPLEX WITH TIAMULIN</scope>
    <source>
        <strain>ATCC 13939 / DSM 20539 / JCM 16871 / CCUG 27074 / LMG 4051 / NBRC 15346 / NCIMB 9279 / VKM B-1422 / R1</strain>
    </source>
</reference>
<reference key="9">
    <citation type="journal article" date="2005" name="Proc. Natl. Acad. Sci. U.S.A.">
        <title>Structure of trigger factor binding domain in biologically homologous complex with eubacterial ribosome reveals its chaperone action.</title>
        <authorList>
            <person name="Baram D."/>
            <person name="Pyetan E."/>
            <person name="Sittner A."/>
            <person name="Auerbach-Nevo T."/>
            <person name="Bashan A."/>
            <person name="Yonath A."/>
        </authorList>
    </citation>
    <scope>X-RAY CRYSTALLOGRAPHY (3.5 ANGSTROMS) OF THE 50S SUBUNIT IN COMPLEX WITH TRIGGER FACTOR</scope>
</reference>
<reference key="10">
    <citation type="journal article" date="2005" name="Structure">
        <title>The binding mode of the trigger factor on the ribosome: implications for protein folding and SRP interaction.</title>
        <authorList>
            <person name="Schluenzen F."/>
            <person name="Wilson D.N."/>
            <person name="Tian P."/>
            <person name="Harms J.M."/>
            <person name="McInnes S.J."/>
            <person name="Hansen H.A.S."/>
            <person name="Albrecht R."/>
            <person name="Buerger J."/>
            <person name="Wilbanks S.M."/>
            <person name="Fucini P."/>
        </authorList>
    </citation>
    <scope>X-RAY CRYSTALLOGRAPHY (3.35 ANGSTROMS) OF THE 50S SUBUNIT IN COMPLEX WITH TRIGGER FACTOR</scope>
</reference>
<organism>
    <name type="scientific">Deinococcus radiodurans (strain ATCC 13939 / DSM 20539 / JCM 16871 / CCUG 27074 / LMG 4051 / NBRC 15346 / NCIMB 9279 / VKM B-1422 / R1)</name>
    <dbReference type="NCBI Taxonomy" id="243230"/>
    <lineage>
        <taxon>Bacteria</taxon>
        <taxon>Thermotogati</taxon>
        <taxon>Deinococcota</taxon>
        <taxon>Deinococci</taxon>
        <taxon>Deinococcales</taxon>
        <taxon>Deinococcaceae</taxon>
        <taxon>Deinococcus</taxon>
    </lineage>
</organism>
<gene>
    <name type="primary">rpmC</name>
    <name type="ordered locus">DR_0319</name>
</gene>
<proteinExistence type="evidence at protein level"/>
<comment type="function">
    <text>Binds the 23S rRNA. One of the proteins that surrounds the polypeptide exit tunnel on the outside of the subunit.</text>
</comment>
<comment type="subunit">
    <text evidence="1 2 3 4 5 6 7 8">Part of the 50S ribosomal subunit. Contacts protein L23 and trigger factor when it is complexed with the ribosome (PubMed:16091460, PubMed:16271892).</text>
</comment>
<comment type="similarity">
    <text evidence="9">Belongs to the universal ribosomal protein uL29 family.</text>
</comment>
<keyword id="KW-0002">3D-structure</keyword>
<keyword id="KW-0903">Direct protein sequencing</keyword>
<keyword id="KW-1185">Reference proteome</keyword>
<keyword id="KW-0687">Ribonucleoprotein</keyword>
<keyword id="KW-0689">Ribosomal protein</keyword>
<keyword id="KW-0694">RNA-binding</keyword>
<keyword id="KW-0699">rRNA-binding</keyword>
<feature type="chain" id="PRO_0000130383" description="Large ribosomal subunit protein uL29">
    <location>
        <begin position="1"/>
        <end position="67"/>
    </location>
</feature>
<feature type="helix" evidence="10">
    <location>
        <begin position="4"/>
        <end position="7"/>
    </location>
</feature>
<feature type="helix" evidence="10">
    <location>
        <begin position="11"/>
        <end position="34"/>
    </location>
</feature>
<feature type="helix" evidence="10">
    <location>
        <begin position="40"/>
        <end position="63"/>
    </location>
</feature>
<dbReference type="EMBL" id="AE000513">
    <property type="protein sequence ID" value="AAF09900.1"/>
    <property type="molecule type" value="Genomic_DNA"/>
</dbReference>
<dbReference type="PIR" id="G75534">
    <property type="entry name" value="G75534"/>
</dbReference>
<dbReference type="RefSeq" id="NP_294042.1">
    <property type="nucleotide sequence ID" value="NC_001263.1"/>
</dbReference>
<dbReference type="RefSeq" id="WP_010886964.1">
    <property type="nucleotide sequence ID" value="NC_001263.1"/>
</dbReference>
<dbReference type="PDB" id="1NKW">
    <property type="method" value="X-ray"/>
    <property type="resolution" value="3.10 A"/>
    <property type="chains" value="W=1-67"/>
</dbReference>
<dbReference type="PDB" id="1NWX">
    <property type="method" value="X-ray"/>
    <property type="resolution" value="3.50 A"/>
    <property type="chains" value="W=1-67"/>
</dbReference>
<dbReference type="PDB" id="1NWY">
    <property type="method" value="X-ray"/>
    <property type="resolution" value="3.30 A"/>
    <property type="chains" value="W=1-67"/>
</dbReference>
<dbReference type="PDB" id="1SM1">
    <property type="method" value="X-ray"/>
    <property type="resolution" value="3.42 A"/>
    <property type="chains" value="W=1-67"/>
</dbReference>
<dbReference type="PDB" id="1XBP">
    <property type="method" value="X-ray"/>
    <property type="resolution" value="3.50 A"/>
    <property type="chains" value="W=1-67"/>
</dbReference>
<dbReference type="PDB" id="2AAR">
    <property type="method" value="X-ray"/>
    <property type="resolution" value="3.50 A"/>
    <property type="chains" value="W=1-67"/>
</dbReference>
<dbReference type="PDB" id="2D3O">
    <property type="method" value="X-ray"/>
    <property type="resolution" value="3.35 A"/>
    <property type="chains" value="W=1-67"/>
</dbReference>
<dbReference type="PDB" id="2ZJP">
    <property type="method" value="X-ray"/>
    <property type="resolution" value="3.70 A"/>
    <property type="chains" value="V=1-67"/>
</dbReference>
<dbReference type="PDB" id="2ZJQ">
    <property type="method" value="X-ray"/>
    <property type="resolution" value="3.30 A"/>
    <property type="chains" value="V=1-67"/>
</dbReference>
<dbReference type="PDB" id="2ZJR">
    <property type="method" value="X-ray"/>
    <property type="resolution" value="2.91 A"/>
    <property type="chains" value="V=1-67"/>
</dbReference>
<dbReference type="PDB" id="3CF5">
    <property type="method" value="X-ray"/>
    <property type="resolution" value="3.30 A"/>
    <property type="chains" value="V=1-67"/>
</dbReference>
<dbReference type="PDB" id="3DLL">
    <property type="method" value="X-ray"/>
    <property type="resolution" value="3.50 A"/>
    <property type="chains" value="V=1-67"/>
</dbReference>
<dbReference type="PDB" id="3PIO">
    <property type="method" value="X-ray"/>
    <property type="resolution" value="3.25 A"/>
    <property type="chains" value="V=1-67"/>
</dbReference>
<dbReference type="PDB" id="3PIP">
    <property type="method" value="X-ray"/>
    <property type="resolution" value="3.45 A"/>
    <property type="chains" value="V=1-67"/>
</dbReference>
<dbReference type="PDB" id="4IO9">
    <property type="method" value="X-ray"/>
    <property type="resolution" value="3.20 A"/>
    <property type="chains" value="V=1-67"/>
</dbReference>
<dbReference type="PDB" id="4IOA">
    <property type="method" value="X-ray"/>
    <property type="resolution" value="3.20 A"/>
    <property type="chains" value="V=1-67"/>
</dbReference>
<dbReference type="PDB" id="4IOC">
    <property type="method" value="X-ray"/>
    <property type="resolution" value="3.60 A"/>
    <property type="chains" value="V=1-67"/>
</dbReference>
<dbReference type="PDB" id="4U67">
    <property type="method" value="X-ray"/>
    <property type="resolution" value="3.65 A"/>
    <property type="chains" value="V=1-67"/>
</dbReference>
<dbReference type="PDB" id="4V49">
    <property type="method" value="X-ray"/>
    <property type="resolution" value="8.70 A"/>
    <property type="chains" value="W=2-66"/>
</dbReference>
<dbReference type="PDB" id="4V4A">
    <property type="method" value="X-ray"/>
    <property type="resolution" value="9.50 A"/>
    <property type="chains" value="W=2-66"/>
</dbReference>
<dbReference type="PDB" id="4V4G">
    <property type="method" value="X-ray"/>
    <property type="resolution" value="11.50 A"/>
    <property type="chains" value="Y=2-66"/>
</dbReference>
<dbReference type="PDB" id="4WFN">
    <property type="method" value="X-ray"/>
    <property type="resolution" value="3.54 A"/>
    <property type="chains" value="V=1-67"/>
</dbReference>
<dbReference type="PDB" id="5DM6">
    <property type="method" value="X-ray"/>
    <property type="resolution" value="2.90 A"/>
    <property type="chains" value="V=1-66"/>
</dbReference>
<dbReference type="PDB" id="5DM7">
    <property type="method" value="X-ray"/>
    <property type="resolution" value="3.00 A"/>
    <property type="chains" value="V=1-66"/>
</dbReference>
<dbReference type="PDB" id="5JVG">
    <property type="method" value="X-ray"/>
    <property type="resolution" value="3.43 A"/>
    <property type="chains" value="V=1-67"/>
</dbReference>
<dbReference type="PDB" id="5JVH">
    <property type="method" value="X-ray"/>
    <property type="resolution" value="3.58 A"/>
    <property type="chains" value="V=1-67"/>
</dbReference>
<dbReference type="PDB" id="7A0R">
    <property type="method" value="X-ray"/>
    <property type="resolution" value="3.30 A"/>
    <property type="chains" value="V=6-66"/>
</dbReference>
<dbReference type="PDB" id="7A0S">
    <property type="method" value="X-ray"/>
    <property type="resolution" value="3.22 A"/>
    <property type="chains" value="V=6-66"/>
</dbReference>
<dbReference type="PDB" id="7A18">
    <property type="method" value="X-ray"/>
    <property type="resolution" value="3.40 A"/>
    <property type="chains" value="V=13-66"/>
</dbReference>
<dbReference type="PDBsum" id="1NKW"/>
<dbReference type="PDBsum" id="1NWX"/>
<dbReference type="PDBsum" id="1NWY"/>
<dbReference type="PDBsum" id="1SM1"/>
<dbReference type="PDBsum" id="1XBP"/>
<dbReference type="PDBsum" id="2AAR"/>
<dbReference type="PDBsum" id="2D3O"/>
<dbReference type="PDBsum" id="2ZJP"/>
<dbReference type="PDBsum" id="2ZJQ"/>
<dbReference type="PDBsum" id="2ZJR"/>
<dbReference type="PDBsum" id="3CF5"/>
<dbReference type="PDBsum" id="3DLL"/>
<dbReference type="PDBsum" id="3PIO"/>
<dbReference type="PDBsum" id="3PIP"/>
<dbReference type="PDBsum" id="4IO9"/>
<dbReference type="PDBsum" id="4IOA"/>
<dbReference type="PDBsum" id="4IOC"/>
<dbReference type="PDBsum" id="4U67"/>
<dbReference type="PDBsum" id="4V49"/>
<dbReference type="PDBsum" id="4V4A"/>
<dbReference type="PDBsum" id="4V4G"/>
<dbReference type="PDBsum" id="4WFN"/>
<dbReference type="PDBsum" id="5DM6"/>
<dbReference type="PDBsum" id="5DM7"/>
<dbReference type="PDBsum" id="5JVG"/>
<dbReference type="PDBsum" id="5JVH"/>
<dbReference type="PDBsum" id="7A0R"/>
<dbReference type="PDBsum" id="7A0S"/>
<dbReference type="PDBsum" id="7A18"/>
<dbReference type="SMR" id="Q9RXJ4"/>
<dbReference type="FunCoup" id="Q9RXJ4">
    <property type="interactions" value="344"/>
</dbReference>
<dbReference type="IntAct" id="Q9RXJ4">
    <property type="interactions" value="1"/>
</dbReference>
<dbReference type="STRING" id="243230.DR_0319"/>
<dbReference type="PaxDb" id="243230-DR_0319"/>
<dbReference type="EnsemblBacteria" id="AAF09900">
    <property type="protein sequence ID" value="AAF09900"/>
    <property type="gene ID" value="DR_0319"/>
</dbReference>
<dbReference type="GeneID" id="69516551"/>
<dbReference type="KEGG" id="dra:DR_0319"/>
<dbReference type="PATRIC" id="fig|243230.17.peg.485"/>
<dbReference type="eggNOG" id="COG0255">
    <property type="taxonomic scope" value="Bacteria"/>
</dbReference>
<dbReference type="HOGENOM" id="CLU_158491_0_2_0"/>
<dbReference type="InParanoid" id="Q9RXJ4"/>
<dbReference type="OrthoDB" id="9815192at2"/>
<dbReference type="EvolutionaryTrace" id="Q9RXJ4"/>
<dbReference type="Proteomes" id="UP000002524">
    <property type="component" value="Chromosome 1"/>
</dbReference>
<dbReference type="GO" id="GO:0022625">
    <property type="term" value="C:cytosolic large ribosomal subunit"/>
    <property type="evidence" value="ECO:0000318"/>
    <property type="project" value="GO_Central"/>
</dbReference>
<dbReference type="GO" id="GO:0019843">
    <property type="term" value="F:rRNA binding"/>
    <property type="evidence" value="ECO:0007669"/>
    <property type="project" value="UniProtKB-KW"/>
</dbReference>
<dbReference type="GO" id="GO:0003735">
    <property type="term" value="F:structural constituent of ribosome"/>
    <property type="evidence" value="ECO:0007669"/>
    <property type="project" value="InterPro"/>
</dbReference>
<dbReference type="GO" id="GO:0006412">
    <property type="term" value="P:translation"/>
    <property type="evidence" value="ECO:0007669"/>
    <property type="project" value="UniProtKB-UniRule"/>
</dbReference>
<dbReference type="CDD" id="cd00427">
    <property type="entry name" value="Ribosomal_L29_HIP"/>
    <property type="match status" value="1"/>
</dbReference>
<dbReference type="FunFam" id="1.10.287.310:FF:000005">
    <property type="entry name" value="50S ribosomal protein L29"/>
    <property type="match status" value="1"/>
</dbReference>
<dbReference type="Gene3D" id="1.10.287.310">
    <property type="match status" value="1"/>
</dbReference>
<dbReference type="HAMAP" id="MF_00374">
    <property type="entry name" value="Ribosomal_uL29"/>
    <property type="match status" value="1"/>
</dbReference>
<dbReference type="InterPro" id="IPR050063">
    <property type="entry name" value="Ribosomal_protein_uL29"/>
</dbReference>
<dbReference type="InterPro" id="IPR001854">
    <property type="entry name" value="Ribosomal_uL29"/>
</dbReference>
<dbReference type="InterPro" id="IPR018254">
    <property type="entry name" value="Ribosomal_uL29_CS"/>
</dbReference>
<dbReference type="InterPro" id="IPR036049">
    <property type="entry name" value="Ribosomal_uL29_sf"/>
</dbReference>
<dbReference type="NCBIfam" id="TIGR00012">
    <property type="entry name" value="L29"/>
    <property type="match status" value="1"/>
</dbReference>
<dbReference type="PANTHER" id="PTHR10916">
    <property type="entry name" value="60S RIBOSOMAL PROTEIN L35/50S RIBOSOMAL PROTEIN L29"/>
    <property type="match status" value="1"/>
</dbReference>
<dbReference type="PANTHER" id="PTHR10916:SF0">
    <property type="entry name" value="LARGE RIBOSOMAL SUBUNIT PROTEIN UL29C"/>
    <property type="match status" value="1"/>
</dbReference>
<dbReference type="Pfam" id="PF00831">
    <property type="entry name" value="Ribosomal_L29"/>
    <property type="match status" value="1"/>
</dbReference>
<dbReference type="SUPFAM" id="SSF46561">
    <property type="entry name" value="Ribosomal protein L29 (L29p)"/>
    <property type="match status" value="1"/>
</dbReference>
<dbReference type="PROSITE" id="PS00579">
    <property type="entry name" value="RIBOSOMAL_L29"/>
    <property type="match status" value="1"/>
</dbReference>
<sequence>MKPSEMRNLQATDFAKEIDARKKELMELRFQAAAGQLAQPHRVRQLRREVAQLNTVKAELARKGEQQ</sequence>
<accession>Q9RXJ4</accession>
<evidence type="ECO:0000269" key="1">
    <source>
    </source>
</evidence>
<evidence type="ECO:0000269" key="2">
    <source>
    </source>
</evidence>
<evidence type="ECO:0000269" key="3">
    <source>
    </source>
</evidence>
<evidence type="ECO:0000269" key="4">
    <source>
    </source>
</evidence>
<evidence type="ECO:0000269" key="5">
    <source>
    </source>
</evidence>
<evidence type="ECO:0000269" key="6">
    <source>
    </source>
</evidence>
<evidence type="ECO:0000269" key="7">
    <source>
    </source>
</evidence>
<evidence type="ECO:0000269" key="8">
    <source>
    </source>
</evidence>
<evidence type="ECO:0000305" key="9"/>
<evidence type="ECO:0007829" key="10">
    <source>
        <dbReference type="PDB" id="5DM6"/>
    </source>
</evidence>
<protein>
    <recommendedName>
        <fullName evidence="9">Large ribosomal subunit protein uL29</fullName>
    </recommendedName>
    <alternativeName>
        <fullName>50S ribosomal protein L29</fullName>
    </alternativeName>
</protein>